<accession>P84189</accession>
<accession>A0A218QWX8</accession>
<accession>A0A218QWX9</accession>
<accession>P84191</accession>
<dbReference type="EMBL" id="GEUW01000058">
    <property type="protein sequence ID" value="JAW06987.1"/>
    <property type="status" value="ALT_INIT"/>
    <property type="molecule type" value="Transcribed_RNA"/>
</dbReference>
<dbReference type="EMBL" id="GEUW01000053">
    <property type="protein sequence ID" value="JAW06992.1"/>
    <property type="molecule type" value="Transcribed_RNA"/>
</dbReference>
<dbReference type="EMBL" id="GEUW01000007">
    <property type="protein sequence ID" value="JAW07038.1"/>
    <property type="molecule type" value="Transcribed_RNA"/>
</dbReference>
<dbReference type="EMBL" id="MT450715">
    <property type="protein sequence ID" value="QPD99051.1"/>
    <property type="molecule type" value="mRNA"/>
</dbReference>
<dbReference type="iPTMnet" id="P84189"/>
<dbReference type="GO" id="GO:0005576">
    <property type="term" value="C:extracellular region"/>
    <property type="evidence" value="ECO:0007669"/>
    <property type="project" value="UniProtKB-SubCell"/>
</dbReference>
<dbReference type="GO" id="GO:0090729">
    <property type="term" value="F:toxin activity"/>
    <property type="evidence" value="ECO:0007669"/>
    <property type="project" value="UniProtKB-KW"/>
</dbReference>
<dbReference type="GO" id="GO:0008217">
    <property type="term" value="P:regulation of blood pressure"/>
    <property type="evidence" value="ECO:0007669"/>
    <property type="project" value="UniProtKB-KW"/>
</dbReference>
<name>NDBH1_TITSE</name>
<feature type="signal peptide" evidence="2">
    <location>
        <begin position="1"/>
        <end position="24"/>
    </location>
</feature>
<feature type="propeptide" id="PRO_0000455426" evidence="16">
    <location>
        <begin position="25"/>
        <end position="35"/>
    </location>
</feature>
<feature type="peptide" id="PRO_0000239433" description="Hypotensin-1" evidence="4">
    <location>
        <begin position="36"/>
        <end position="60"/>
    </location>
</feature>
<feature type="peptide" id="PRO_0000239435" description="Hypotensin-3" evidence="4">
    <location>
        <begin position="36"/>
        <end position="59"/>
    </location>
</feature>
<feature type="peptide" id="PRO_0000461727" description="Cryptide TyPep-1" evidence="6">
    <location>
        <begin position="36"/>
        <end position="51"/>
    </location>
</feature>
<feature type="propeptide" id="PRO_0000455427" evidence="16">
    <location>
        <begin position="61"/>
        <end position="72"/>
    </location>
</feature>
<feature type="region of interest" description="Disordered" evidence="3">
    <location>
        <begin position="53"/>
        <end position="72"/>
    </location>
</feature>
<feature type="site" description="Important for potentiating BK effects">
    <location>
        <begin position="58"/>
        <end position="59"/>
    </location>
</feature>
<feature type="modified residue" description="Phosphoserine" evidence="7">
    <location>
        <position position="41"/>
    </location>
</feature>
<evidence type="ECO:0000250" key="1">
    <source>
        <dbReference type="UniProtKB" id="P0DRE6"/>
    </source>
</evidence>
<evidence type="ECO:0000255" key="2"/>
<evidence type="ECO:0000256" key="3">
    <source>
        <dbReference type="SAM" id="MobiDB-lite"/>
    </source>
</evidence>
<evidence type="ECO:0000269" key="4">
    <source>
    </source>
</evidence>
<evidence type="ECO:0000269" key="5">
    <source>
    </source>
</evidence>
<evidence type="ECO:0000269" key="6">
    <source>
    </source>
</evidence>
<evidence type="ECO:0000269" key="7">
    <source>
    </source>
</evidence>
<evidence type="ECO:0000269" key="8">
    <source>
    </source>
</evidence>
<evidence type="ECO:0000269" key="9">
    <source>
    </source>
</evidence>
<evidence type="ECO:0000269" key="10">
    <source>
    </source>
</evidence>
<evidence type="ECO:0000303" key="11">
    <source>
    </source>
</evidence>
<evidence type="ECO:0000303" key="12">
    <source>
    </source>
</evidence>
<evidence type="ECO:0000303" key="13">
    <source>
    </source>
</evidence>
<evidence type="ECO:0000303" key="14">
    <source>
    </source>
</evidence>
<evidence type="ECO:0000305" key="15"/>
<evidence type="ECO:0000305" key="16">
    <source>
    </source>
</evidence>
<evidence type="ECO:0000305" key="17">
    <source>
    </source>
</evidence>
<evidence type="ECO:0000305" key="18">
    <source>
    </source>
</evidence>
<evidence type="ECO:0000305" key="19">
    <source>
    </source>
</evidence>
<evidence type="ECO:0000312" key="20">
    <source>
        <dbReference type="EMBL" id="JAW06987.1"/>
    </source>
</evidence>
<evidence type="ECO:0000312" key="21">
    <source>
        <dbReference type="EMBL" id="JAW06992.1"/>
    </source>
</evidence>
<evidence type="ECO:0000312" key="22">
    <source>
        <dbReference type="EMBL" id="JAW07038.1"/>
    </source>
</evidence>
<evidence type="ECO:0000312" key="23">
    <source>
        <dbReference type="EMBL" id="QPD99051.1"/>
    </source>
</evidence>
<protein>
    <recommendedName>
        <fullName evidence="16">Hypotensin-1</fullName>
    </recommendedName>
    <alternativeName>
        <fullName evidence="14">Anti-hypertensive peptide</fullName>
    </alternativeName>
    <alternativeName>
        <fullName evidence="11">Hypotensin I</fullName>
        <shortName evidence="11">TsHpt-I</shortName>
    </alternativeName>
    <alternativeName>
        <fullName evidence="18">Tityustoxin-14 1</fullName>
        <shortName evidence="23">Hypotensin toxin Ts14.1</shortName>
        <shortName evidence="12">Ts14 1</shortName>
    </alternativeName>
    <component>
        <recommendedName>
            <fullName evidence="13">Cryptide TyPep-1</fullName>
        </recommendedName>
    </component>
    <component>
        <recommendedName>
            <fullName evidence="16">Hypotensin-3</fullName>
        </recommendedName>
        <alternativeName>
            <fullName evidence="11">Hypotensin III</fullName>
            <shortName evidence="11">TsHpt-III</shortName>
        </alternativeName>
        <alternativeName>
            <fullName evidence="12">Toxin Ts14 3</fullName>
        </alternativeName>
    </component>
</protein>
<keyword id="KW-1222">Bradykinin receptor impairing toxin</keyword>
<keyword id="KW-0903">Direct protein sequencing</keyword>
<keyword id="KW-1213">G-protein coupled receptor impairing toxin</keyword>
<keyword id="KW-0382">Hypotensive agent</keyword>
<keyword id="KW-0597">Phosphoprotein</keyword>
<keyword id="KW-0964">Secreted</keyword>
<keyword id="KW-0732">Signal</keyword>
<keyword id="KW-0800">Toxin</keyword>
<organism>
    <name type="scientific">Tityus serrulatus</name>
    <name type="common">Brazilian scorpion</name>
    <dbReference type="NCBI Taxonomy" id="6887"/>
    <lineage>
        <taxon>Eukaryota</taxon>
        <taxon>Metazoa</taxon>
        <taxon>Ecdysozoa</taxon>
        <taxon>Arthropoda</taxon>
        <taxon>Chelicerata</taxon>
        <taxon>Arachnida</taxon>
        <taxon>Scorpiones</taxon>
        <taxon>Buthida</taxon>
        <taxon>Buthoidea</taxon>
        <taxon>Buthidae</taxon>
        <taxon>Tityus</taxon>
    </lineage>
</organism>
<reference key="1">
    <citation type="journal article" date="2012" name="O. J. Gen.">
        <title>Transcriptome analysis of the Tityus serrulatus scorpion venom gland.</title>
        <authorList>
            <person name="Alvarenga E.R."/>
            <person name="Mendes T.M."/>
            <person name="Magalhaes B.F."/>
            <person name="Siqueira F.F."/>
            <person name="Dantas A.E."/>
            <person name="Barroca T.M."/>
            <person name="Horta C.C."/>
            <person name="Kalapothakis E."/>
        </authorList>
    </citation>
    <scope>NUCLEOTIDE SEQUENCE [MRNA]</scope>
    <source>
        <tissue>Venom gland</tissue>
    </source>
</reference>
<reference evidence="20 21 22" key="2">
    <citation type="journal article" date="2018" name="PLoS ONE">
        <title>Proteomic endorsed transcriptomic profiles of venom glands from Tityus obscurus and T. serrulatus scorpions.</title>
        <authorList>
            <person name="de Oliveira U.C."/>
            <person name="Nishiyama M.Y. Jr."/>
            <person name="Dos Santos M.B.V."/>
            <person name="Santos-da-Silva A.P."/>
            <person name="Chalkidis H.M."/>
            <person name="Souza-Imberg A."/>
            <person name="Candido D.M."/>
            <person name="Yamanouye N."/>
            <person name="Dorce V.A.C."/>
            <person name="Junqueira-de-Azevedo I.L.M."/>
        </authorList>
    </citation>
    <scope>NUCLEOTIDE SEQUENCE [LARGE SCALE MRNA]</scope>
    <source>
        <tissue>Venom gland</tissue>
    </source>
</reference>
<reference evidence="23" key="3">
    <citation type="journal article" date="2021" name="Toxicon">
        <title>Novel components of Tityus serrulatus venom: a transcriptomic approach.</title>
        <authorList>
            <person name="Kalapothakis Y."/>
            <person name="Miranda K."/>
            <person name="Pereira A.H."/>
            <person name="Witt A.S.A."/>
            <person name="Marani C."/>
            <person name="Martins A.P."/>
            <person name="Leal H.G."/>
            <person name="Campos-Junior E."/>
            <person name="Pimenta A.M.C."/>
            <person name="Borges A."/>
            <person name="Chavez-Olortegui C."/>
            <person name="Kalapothakis E."/>
        </authorList>
    </citation>
    <scope>NUCLEOTIDE SEQUENCE [LARGE SCALE MRNA]</scope>
    <source>
        <tissue>Venom gland</tissue>
    </source>
</reference>
<reference key="4">
    <citation type="journal article" date="2008" name="Biochem. Biophys. Res. Commun.">
        <title>Tityus serrulatus hypotensins: a new family of peptides from scorpion venom.</title>
        <authorList>
            <person name="Verano-Braga T."/>
            <person name="Rocha-Resende C."/>
            <person name="Silva D.M."/>
            <person name="Ianzer D."/>
            <person name="Martin-Eauclaire M.F."/>
            <person name="Bougis P.E."/>
            <person name="de Lima M.E."/>
            <person name="Santos R.A.S."/>
            <person name="Pimenta A.M.C."/>
        </authorList>
    </citation>
    <scope>PROTEIN SEQUENCE OF 36-60</scope>
    <scope>FUNCTION</scope>
    <scope>SUBCELLULAR LOCATION</scope>
    <scope>PTM</scope>
    <scope>MASS SPECTROMETRY</scope>
    <source>
        <tissue>Venom</tissue>
    </source>
</reference>
<reference key="5">
    <citation type="journal article" date="2008" name="Toxicon">
        <title>Tityus serrulatus venom peptidomics: assessing venom peptide diversity.</title>
        <authorList>
            <person name="Rates B."/>
            <person name="Ferraz K.K."/>
            <person name="Borges M.H."/>
            <person name="Richardson M."/>
            <person name="De Lima M.E."/>
            <person name="Pimenta A.M."/>
        </authorList>
    </citation>
    <scope>PROTEIN SEQUENCE OF 36-51</scope>
    <scope>SUBCELLULAR LOCATION</scope>
    <source>
        <tissue>Venom</tissue>
    </source>
</reference>
<reference key="6">
    <citation type="journal article" date="2024" name="J. Nat. Prod.">
        <title>Profiling the linear peptides of venom from the Brazilian scorpion Tityus serrulatus: structural and functional characterization.</title>
        <authorList>
            <person name="Dias N.B."/>
            <person name="de Souza B.M."/>
            <person name="Cid-Alda F."/>
            <person name="Dorce V.A.C."/>
            <person name="Cocchi F.K."/>
            <person name="Palma M.S."/>
        </authorList>
    </citation>
    <scope>PROTEIN SEQUENCE OF 36-51 (TYPEP-1)</scope>
    <scope>IDENTIFICATION BY MASS SPECTROMETRY</scope>
    <scope>SUBCELLULAR LOCATION</scope>
    <scope>SYNTHESIS OF 36-51</scope>
    <scope>FUNCTION</scope>
    <scope>BIOASSAY</scope>
    <source>
        <tissue>Venom</tissue>
    </source>
</reference>
<reference key="7">
    <citation type="journal article" date="2013" name="J. Proteome Res.">
        <title>Moving pieces in a venomic puzzle: unveiling post-translationally modified toxins from Tityus serrulatus.</title>
        <authorList>
            <person name="Verano-Braga T."/>
            <person name="Dutra A.A."/>
            <person name="Leon I.R."/>
            <person name="Melo-Braga M.N."/>
            <person name="Roepstorff P."/>
            <person name="Pimenta A.M."/>
            <person name="Kjeldsen F."/>
        </authorList>
    </citation>
    <scope>PROTEIN SEQUENCE OF 36-49</scope>
    <scope>MASS SPECTROMETRY</scope>
    <scope>PHOSPHORYLATION AT SER-41</scope>
</reference>
<reference key="8">
    <citation type="journal article" date="2010" name="Toxicon">
        <title>Structure-function studies of Tityus serrulatus hypotensin-I (TsHpt-I): a new agonist of B(2) kinin receptor.</title>
        <authorList>
            <person name="Verano-Braga T."/>
            <person name="Figueiredo-Rezende F."/>
            <person name="Melo M.N."/>
            <person name="Lautner R.Q."/>
            <person name="Gomes E.R.M."/>
            <person name="Mata-Machado L.T."/>
            <person name="Murari A."/>
            <person name="Rocha-Resende C."/>
            <person name="Elena de Lima M."/>
            <person name="Guatimosim S."/>
            <person name="Santos R.A.S."/>
            <person name="Pimenta A.M.C."/>
        </authorList>
    </citation>
    <scope>FUNCTION</scope>
    <scope>SYNTHESIS OF ANALOGS</scope>
</reference>
<reference key="9">
    <citation type="journal article" date="2017" name="Peptides">
        <title>Ts14 from Tityus serrulatus boosts angiogenesis and attenuates inflammation and collagen deposition in sponge-induced granulation tissue in mice.</title>
        <authorList>
            <person name="Cassini-Vieira P."/>
            <person name="Felipetto M."/>
            <person name="Prado L.B."/>
            <person name="Verano-Braga T."/>
            <person name="Andrade S.P."/>
            <person name="Santos R.A.S."/>
            <person name="Teixeira M.M."/>
            <person name="de Lima M.E."/>
            <person name="Pimenta A.M.C."/>
            <person name="Barcelos L.S."/>
        </authorList>
    </citation>
    <scope>FUNCTION</scope>
</reference>
<reference key="10">
    <citation type="journal article" date="2021" name="Toxins">
        <title>New insights into the hypotensins from Tityus serrulatus venom: pro-inflammatory and vasopeptidases modulation activities.</title>
        <authorList>
            <person name="Duzzi B."/>
            <person name="Silva C.C.F."/>
            <person name="Kodama R.T."/>
            <person name="Cajado-Carvalho D."/>
            <person name="Squaiella-Baptistao C.C."/>
            <person name="Portaro F.C.V."/>
        </authorList>
    </citation>
    <scope>FUNCTION</scope>
    <scope>SYNTHESIS OF 36-60</scope>
</reference>
<reference key="11">
    <citation type="journal article" date="2009" name="Protein Pept. Lett.">
        <title>Tityus serrulatus scorpion venom and toxins: an overview.</title>
        <authorList>
            <person name="Cologna C.T."/>
            <person name="Marcussi S."/>
            <person name="Giglio J.R."/>
            <person name="Soares A.M."/>
            <person name="Arantes E.C."/>
        </authorList>
    </citation>
    <scope>NOMENCLATURE</scope>
</reference>
<proteinExistence type="evidence at protein level"/>
<comment type="function">
    <molecule>Hypotensin-1</molecule>
    <text evidence="4 6 8 9">Agonist of the B2 bradykinin receptor (BDKRB2) (PubMed:18445483, PubMed:20417225). Potentiates the hypotensive effect of bradykinin (BK) and induces a direct vasorelaxing effect independent of BK, by endothelium- and nitric oxide (NO)-dependent mechanisms in rat aortic ring preparations (PubMed:18445483, PubMed:20417225). Also exerts proangiogenic, antiinflammatory, and antifibrogenic activities (PubMed:27732900). Does not inhibit the angiotensin-converting enzyme (ACE) but increases its activity, and inhibits neprilysin (NEP) in a non-competitive manner (PubMed:18445483, PubMed:34941683). Exerts intermediate cytotoxicity and pro-inflammatory effects on mouse macrophages, and increases the phagocytic activity of these murine cells (PubMed:34941683).</text>
</comment>
<comment type="function">
    <molecule>Cryptide TyPep-1</molecule>
    <text evidence="1 10">Presents moderate hemolytic activity at physiological concentrations (micromolar range). Does not induce mast cell degranulation, lactate dehydrogenase (LDH) release from mast cells and antimicrobial effects (By similarity). In vivo, causes intense pain (but no edema formation), when injected in mice hind paws. Also induces discomfort and anxiety in mice, as it moderately diminishes locomotion and moderately increases rearing behavior (PubMed:38408354).</text>
</comment>
<comment type="subcellular location">
    <subcellularLocation>
        <location evidence="4 5 6">Secreted</location>
    </subcellularLocation>
</comment>
<comment type="tissue specificity">
    <text evidence="16 17 19">Expressed by the venom gland.</text>
</comment>
<comment type="PTM">
    <molecule>Hypotensin-1</molecule>
    <text evidence="7">undergoes enzymatic cleavages by carboxypeptidases, endopeptidases, and aminopeptidases resulting in at least 46 fragments of this protein.</text>
</comment>
<comment type="mass spectrometry" mass="2726.08" method="Electrospray" evidence="4">
    <molecule>Hypotensin-1</molecule>
    <text>Hypotensin-1.</text>
</comment>
<comment type="mass spectrometry" mass="2655.06" method="Electrospray" evidence="4">
    <molecule>Hypotensin-3</molecule>
    <text>Hypotensin-3.</text>
</comment>
<comment type="miscellaneous">
    <text evidence="15">The primary structure of this cryptide TyPep-1 is identical to that of cryptide Pep-1 from Tityus obscurus (AC P0DRE6).</text>
</comment>
<comment type="similarity">
    <text evidence="15">Belongs to the non-disulfide-bridged peptide (NDBP) superfamily.</text>
</comment>
<comment type="sequence caution" evidence="15">
    <conflict type="erroneous initiation">
        <sequence resource="EMBL-CDS" id="JAW06987"/>
    </conflict>
    <text>Truncated N-terminus.</text>
</comment>
<sequence length="72" mass="8164">MKMMIPVIFSILLLIFSLSSTAMSLEDEQENMEERAEIDFSGIPEDIIKQIKETNAKPPARFDPAAFEKSDD</sequence>